<reference key="1">
    <citation type="journal article" date="1993" name="FEBS Lett.">
        <title>The VP35 and VP40 proteins of filoviruses. Homology between Marburg and Ebola viruses.</title>
        <authorList>
            <person name="Bukreyev A.A."/>
            <person name="Volchkov V.E."/>
            <person name="Blinov V.M."/>
            <person name="Netesov S.V."/>
        </authorList>
    </citation>
    <scope>NUCLEOTIDE SEQUENCE [GENOMIC RNA]</scope>
</reference>
<reference key="2">
    <citation type="journal article" date="1993" name="Virus Res.">
        <title>Sequence analysis of the Ebola virus genome: organization, genetic elements, and comparison with the genome of Marburg virus.</title>
        <authorList>
            <person name="Sanchez A."/>
            <person name="Kiley M.P."/>
            <person name="Holloway B.P."/>
            <person name="Auperin D.D."/>
        </authorList>
    </citation>
    <scope>NUCLEOTIDE SEQUENCE [GENOMIC RNA]</scope>
</reference>
<reference key="3">
    <citation type="journal article" date="1999" name="J. Gen. Virol.">
        <title>Characterization of the L gene and 5' trailer region of Ebola virus.</title>
        <authorList>
            <person name="Volchkov V.E."/>
            <person name="Volchkova V.A."/>
            <person name="Chepurnov A.A."/>
            <person name="Blinov V.M."/>
            <person name="Netesov S.V."/>
            <person name="Feldmann H."/>
        </authorList>
    </citation>
    <scope>NUCLEOTIDE SEQUENCE [GENOMIC RNA]</scope>
</reference>
<reference key="4">
    <citation type="journal article" date="2000" name="Virology">
        <title>Molecular characterization of guinea pig-adapted variants of Ebola virus.</title>
        <authorList>
            <person name="Volchkov V.E."/>
            <person name="Chepurnov A.A."/>
            <person name="Volchkova V.A."/>
            <person name="Ternovoj V.A."/>
            <person name="Klenk H.D."/>
        </authorList>
    </citation>
    <scope>NUCLEOTIDE SEQUENCE [GENOMIC RNA]</scope>
    <source>
        <strain>Isolate guinea pig-adapted</strain>
    </source>
</reference>
<reference key="5">
    <citation type="submission" date="2002-08" db="EMBL/GenBank/DDBJ databases">
        <authorList>
            <person name="Wilson J.A."/>
            <person name="Kondig J.P."/>
            <person name="Kuehne A.I."/>
            <person name="Hart M.K."/>
        </authorList>
    </citation>
    <scope>NUCLEOTIDE SEQUENCE [GENOMIC RNA]</scope>
</reference>
<reference key="6">
    <citation type="journal article" date="2000" name="EMBO J.">
        <title>Membrane association induces a conformational change in the Ebola virus matrix protein.</title>
        <authorList>
            <person name="Scianimanico S."/>
            <person name="Schoehn G."/>
            <person name="Timmins J."/>
            <person name="Ruigrok R.H."/>
            <person name="Klenk H.D."/>
            <person name="Weissenhorn W."/>
        </authorList>
    </citation>
    <scope>SUBUNIT</scope>
</reference>
<reference key="7">
    <citation type="journal article" date="2000" name="Proc. Natl. Acad. Sci. U.S.A.">
        <title>A PPxY motif within the VP40 protein of Ebola virus interacts physically and functionally with a ubiquitin ligase: implications for filovirus budding.</title>
        <authorList>
            <person name="Harty R.N."/>
            <person name="Brown M.E."/>
            <person name="Wang G."/>
            <person name="Huibregtse J."/>
            <person name="Hayes F.P."/>
        </authorList>
    </citation>
    <scope>INTERACTION WITH WW DOMAINS OF HOST UBIQUITIN LIGASES</scope>
    <scope>MUTAGENESIS OF TYR-13</scope>
</reference>
<reference key="8">
    <citation type="journal article" date="2003" name="Virology">
        <title>Oligomerization and polymerization of the filovirus matrix protein VP40.</title>
        <authorList>
            <person name="Timmins J."/>
            <person name="Schoehn G."/>
            <person name="Kohlhaas C."/>
            <person name="Klenk H.D."/>
            <person name="Ruigrok R.W."/>
            <person name="Weissenhorn W."/>
        </authorList>
    </citation>
    <scope>SUBUNIT</scope>
</reference>
<reference key="9">
    <citation type="journal article" date="2003" name="J. Mol. Biol.">
        <title>Ebola virus matrix protein VP40 interaction with human cellular factors Tsg101 and Nedd4.</title>
        <authorList>
            <person name="Timmins J."/>
            <person name="Schoehn G."/>
            <person name="Ricard-Blum S."/>
            <person name="Scianimanico S."/>
            <person name="Vernet T."/>
            <person name="Ruigrok R.W."/>
            <person name="Weissenhorn W."/>
        </authorList>
    </citation>
    <scope>INTERACTION WITH HUMAN TSG101 AND NEDD4</scope>
</reference>
<reference key="10">
    <citation type="journal article" date="2005" name="J. Virol.">
        <title>Ebola virus VP40 late domains are not essential for viral replication in cell culture.</title>
        <authorList>
            <person name="Neumann G."/>
            <person name="Ebihara H."/>
            <person name="Takada A."/>
            <person name="Noda T."/>
            <person name="Kobasa D."/>
            <person name="Jasenosky L.D."/>
            <person name="Watanabe S."/>
            <person name="Kim J.H."/>
            <person name="Feldmann H."/>
            <person name="Kawaoka Y."/>
        </authorList>
    </citation>
    <scope>MUTAGENESIS OF PRO-7 AND 10-PRO-PRO-11</scope>
</reference>
<reference key="11">
    <citation type="journal article" date="2005" name="J. Struct. Biol.">
        <title>An all-atom model of the pore-like structure of hexameric VP40 from Ebola: structural insights into the monomer-hexamer transition.</title>
        <authorList>
            <person name="Nguyen T.L."/>
            <person name="Schoehn G."/>
            <person name="Weissenhorn W."/>
            <person name="Hermone A.R."/>
            <person name="Burnett J.C."/>
            <person name="Panchal R.G."/>
            <person name="McGrath C."/>
            <person name="Zaharevitz D.W."/>
            <person name="Aman M.J."/>
            <person name="Gussio R."/>
            <person name="Bavari S."/>
        </authorList>
    </citation>
    <scope>SUBUNIT</scope>
</reference>
<reference key="12">
    <citation type="journal article" date="2005" name="J. Virol.">
        <title>VP40 octamers are essential for Ebola virus replication.</title>
        <authorList>
            <person name="Hoenen T."/>
            <person name="Volchkov V."/>
            <person name="Kolesnikova L."/>
            <person name="Mittler E."/>
            <person name="Timmins J."/>
            <person name="Ottmann M."/>
            <person name="Reynard O."/>
            <person name="Becker S."/>
            <person name="Weissenhorn W."/>
        </authorList>
    </citation>
    <scope>MUTAGENESIS OF PHE-125 AND ARG-134</scope>
</reference>
<reference key="13">
    <citation type="journal article" date="2005" name="Virology">
        <title>Functional characterization of Ebola virus L-domains using VSV recombinants.</title>
        <authorList>
            <person name="Irie T."/>
            <person name="Licata J.M."/>
            <person name="Harty R.N."/>
        </authorList>
    </citation>
    <scope>FUNCTION</scope>
</reference>
<reference key="14">
    <citation type="journal article" date="2006" name="Virol. J.">
        <title>Effect of Ebola virus proteins GP, NP and VP35 on VP40 VLP morphology.</title>
        <authorList>
            <person name="Johnson R.F."/>
            <person name="Bell P."/>
            <person name="Harty R.N."/>
        </authorList>
    </citation>
    <scope>FUNCTION</scope>
</reference>
<reference key="15">
    <citation type="journal article" date="2006" name="J. Virol.">
        <title>Ebola virus VP35-VP40 interaction is sufficient for packaging 3E-5E minigenome RNA into virus-like particles.</title>
        <authorList>
            <person name="Johnson R.F."/>
            <person name="McCarthy S.E."/>
            <person name="Godlewski P.J."/>
            <person name="Harty R.N."/>
        </authorList>
    </citation>
    <scope>INTERACTION WITH VP35</scope>
</reference>
<reference key="16">
    <citation type="journal article" date="2007" name="J. Virol.">
        <title>Mapping of the VP40-binding regions of the nucleoprotein of Ebola virus.</title>
        <authorList>
            <person name="Noda T."/>
            <person name="Watanabe S."/>
            <person name="Sagara H."/>
            <person name="Kawaoka Y."/>
        </authorList>
    </citation>
    <scope>INTERACTION WITH THE NUCLEOPROTEIN</scope>
</reference>
<reference key="17">
    <citation type="journal article" date="2007" name="J. Virol.">
        <title>Role for amino acids 212KLR214 of Ebola virus VP40 in assembly and budding.</title>
        <authorList>
            <person name="McCarthy S.E."/>
            <person name="Johnson R.F."/>
            <person name="Zhang Y.-A."/>
            <person name="Sunyer J.O."/>
            <person name="Harty R.N."/>
        </authorList>
    </citation>
    <scope>MUTAGENESIS OF 212-LYS--ARG-214</scope>
</reference>
<reference key="18">
    <citation type="journal article" date="2011" name="J. Infect. Dis.">
        <title>Characterization of filovirus protein-protein interactions in mammalian cells using bimolecular complementation.</title>
        <authorList>
            <person name="Liu Y."/>
            <person name="Stone S."/>
            <person name="Harty R.N."/>
        </authorList>
    </citation>
    <scope>INTERACTION WITH NP</scope>
    <scope>SUBCELLULAR LOCATION</scope>
</reference>
<reference key="19">
    <citation type="journal article" date="2013" name="J. Virol.">
        <title>Host IQGAP1 and Ebola virus VP40 interactions facilitate virus-like particle egress.</title>
        <authorList>
            <person name="Lu J."/>
            <person name="Qu Y."/>
            <person name="Liu Y."/>
            <person name="Jambusaria R."/>
            <person name="Han Z."/>
            <person name="Ruthel G."/>
            <person name="Freedman B.D."/>
            <person name="Harty R.N."/>
        </authorList>
    </citation>
    <scope>FUNCTION</scope>
    <scope>INTERACTION WITH HOST IQGAP1</scope>
    <scope>SUBCELLULAR LOCATION</scope>
</reference>
<reference key="20">
    <citation type="journal article" date="2013" name="Cell">
        <title>Structural rearrangement of ebola virus VP40 begets multiple functions in the virus life cycle.</title>
        <authorList>
            <person name="Bornholdt Z.A."/>
            <person name="Noda T."/>
            <person name="Abelson D.M."/>
            <person name="Halfmann P."/>
            <person name="Wood M.R."/>
            <person name="Kawaoka Y."/>
            <person name="Saphire E.O."/>
        </authorList>
    </citation>
    <scope>SUBUNIT</scope>
</reference>
<reference key="21">
    <citation type="journal article" date="2014" name="Protein Sci.">
        <title>Conformational plasticity of the Ebola virus matrix protein.</title>
        <authorList>
            <person name="Radzimanowski J."/>
            <person name="Effantin G."/>
            <person name="Weissenhorn W."/>
        </authorList>
    </citation>
    <scope>REVIEW</scope>
</reference>
<reference key="22">
    <citation type="journal article" date="2015" name="J. Infect. Dis.">
        <title>ALIX Rescues Budding of a Double PTAP/PPEY L-Domain Deletion Mutant of Ebola VP40: A Role for ALIX in Ebola Virus Egress.</title>
        <authorList>
            <person name="Han Z."/>
            <person name="Madara J.J."/>
            <person name="Liu Y."/>
            <person name="Liu W."/>
            <person name="Ruthel G."/>
            <person name="Freedman B.D."/>
            <person name="Harty R.N."/>
        </authorList>
    </citation>
    <scope>FUNCTION</scope>
    <scope>INTERACTION WITH HOST PDCD6IP/ALIX</scope>
    <scope>MOTIF</scope>
</reference>
<reference key="23">
    <citation type="journal article" date="2016" name="J. Virol.">
        <title>ITCH E3 Ubiquitin Ligase Interacts with Ebola Virus VP40 To Regulate Budding.</title>
        <authorList>
            <person name="Han Z."/>
            <person name="Sagum C.A."/>
            <person name="Bedford M.T."/>
            <person name="Sidhu S.S."/>
            <person name="Sudol M."/>
            <person name="Harty R.N."/>
        </authorList>
    </citation>
    <scope>FUNCTION</scope>
    <scope>INTERACTION WITH HOST ITCH</scope>
</reference>
<reference key="24">
    <citation type="journal article" date="2016" name="Sci. Rep.">
        <title>The Ebola Virus matrix protein, VP40, requires phosphatidylinositol 4,5-bisphosphate (PI(4,5)P2) for extensive oligomerization at the plasma membrane and viral egress.</title>
        <authorList>
            <person name="Johnson K.A."/>
            <person name="Taghon G.J."/>
            <person name="Scott J.L."/>
            <person name="Stahelin R.V."/>
        </authorList>
    </citation>
    <scope>SUBCELLULAR LOCATION</scope>
    <scope>SUBUNIT</scope>
    <scope>FUNCTION</scope>
</reference>
<reference key="25">
    <citation type="journal article" date="2016" name="Sci. Rep.">
        <title>Regulation of Ebola virus VP40 matrix protein by SUMO.</title>
        <authorList>
            <person name="Baz-Martinez M."/>
            <person name="El Motiam A."/>
            <person name="Ruibal P."/>
            <person name="Condezo G.N."/>
            <person name="de la Cruz-Herrera C.F."/>
            <person name="Lang V."/>
            <person name="Collado M."/>
            <person name="San Martin C."/>
            <person name="Rodriguez M.S."/>
            <person name="Munoz-Fontela C."/>
            <person name="Rivas C."/>
        </authorList>
    </citation>
    <scope>SUMOYLATION AT LYS-326</scope>
    <scope>MUTAGENESIS OF LYS-326</scope>
</reference>
<reference key="26">
    <citation type="journal article" date="2016" name="Front. Microbiol.">
        <title>Ebola VP40 in Exosomes Can Cause Immune Cell Dysfunction.</title>
        <authorList>
            <person name="Pleet M.L."/>
            <person name="Mathiesen A."/>
            <person name="DeMarino C."/>
            <person name="Akpamagbo Y.A."/>
            <person name="Barclay R.A."/>
            <person name="Schwab A."/>
            <person name="Iordanskiy S."/>
            <person name="Sampey G.C."/>
            <person name="Lepene B."/>
            <person name="Nekhai S."/>
            <person name="Aman M.J."/>
            <person name="Kashanchi F."/>
        </authorList>
    </citation>
    <scope>FUNCTION</scope>
    <scope>SUBCELLULAR LOCATION</scope>
</reference>
<reference key="27">
    <citation type="journal article" date="2017" name="J. Virol.">
        <title>Ubiquitin Ligase WWP1 Interacts with Ebola Virus VP40 To Regulate Egress.</title>
        <authorList>
            <person name="Han Z."/>
            <person name="Sagum C.A."/>
            <person name="Takizawa F."/>
            <person name="Ruthel G."/>
            <person name="Berry C.T."/>
            <person name="Kong J."/>
            <person name="Sunyer J.O."/>
            <person name="Freedman B.D."/>
            <person name="Bedford M.T."/>
            <person name="Sidhu S.S."/>
            <person name="Sudol M."/>
            <person name="Harty R.N."/>
        </authorList>
    </citation>
    <scope>SUBCELLULAR LOCATION</scope>
    <scope>UBIQUITINATION BY HOST WWP1</scope>
    <scope>NOMENCLATURE</scope>
</reference>
<reference key="28">
    <citation type="journal article" date="2017" name="DNA Cell Biol.">
        <title>The Role of Exosomal VP40 in Ebola Virus Disease.</title>
        <authorList>
            <person name="Pleet M.L."/>
            <person name="DeMarino C."/>
            <person name="Lepene B."/>
            <person name="Aman M.J."/>
            <person name="Kashanchi F."/>
        </authorList>
    </citation>
    <scope>REVIEW</scope>
</reference>
<reference key="29">
    <citation type="journal article" date="2018" name="Sci. Rep.">
        <title>A cylindrical assembly model and dynamics of the Ebola virus VP40 structural matrix.</title>
        <authorList>
            <person name="Pavadai E."/>
            <person name="Gerstman B.S."/>
            <person name="Chapagain P.P."/>
        </authorList>
    </citation>
    <scope>SUBUNIT</scope>
</reference>
<reference key="30">
    <citation type="journal article" date="2018" name="Biochem. Biophys. Res. Commun.">
        <title>Acetylation of lysine residues in the recombinant nucleoprotein and VP40 matrix protein of Zaire Ebolavirus by eukaryotic histone acetyltransferases.</title>
        <authorList>
            <person name="Hatakeyama D."/>
            <person name="Ohmi N."/>
            <person name="Saitoh A."/>
            <person name="Makiyama K."/>
            <person name="Morioka M."/>
            <person name="Okazaki H."/>
            <person name="Kuzuhara T."/>
        </authorList>
    </citation>
    <scope>ACETYLATION</scope>
</reference>
<reference key="31">
    <citation type="journal article" date="2018" name="Proc. Natl. Acad. Sci. U.S.A.">
        <title>Ebola virus proteins NP, VP35, and VP24 are essential and sufficient to mediate nucleocapsid transport.</title>
        <authorList>
            <person name="Takamatsu Y."/>
            <person name="Kolesnikova L."/>
            <person name="Becker S."/>
        </authorList>
    </citation>
    <scope>FUNCTION</scope>
</reference>
<reference key="32">
    <citation type="journal article" date="2021" name="Viruses">
        <title>Ubiquitin Ligase SMURF2 Interacts with Filovirus VP40 and Promotes Egress of VP40 VLPs.</title>
        <authorList>
            <person name="Shepley-McTaggart A."/>
            <person name="Schwoerer M.P."/>
            <person name="Sagum C.A."/>
            <person name="Bedford M.T."/>
            <person name="Jaladanki C.K."/>
            <person name="Fan H."/>
            <person name="Cassel J."/>
            <person name="Harty R.N."/>
        </authorList>
    </citation>
    <scope>FUNCTION</scope>
    <scope>INTERACTION WITH HOST SMURF2</scope>
    <scope>DOMAIN</scope>
    <scope>MUTAGENESIS OF 10-PRO--TYR-13</scope>
</reference>
<reference key="33">
    <citation type="journal article" date="2003" name="Structure">
        <title>The matrix protein VP40 from Ebola virus octamerizes into pore-like structures with specific RNA binding properties.</title>
        <authorList>
            <person name="Gomis-Ruth F.X."/>
            <person name="Dessen A."/>
            <person name="Timmins J."/>
            <person name="Bracher A."/>
            <person name="Kolesnikowa L."/>
            <person name="Becker S."/>
            <person name="Klenk H.D."/>
            <person name="Weissenhorn W."/>
        </authorList>
    </citation>
    <scope>X-RAY CRYSTALLOGRAPHY (1.6 ANGSTROMS) OF 55-194 IN COMPLEX WITH RNA</scope>
</reference>
<comment type="function">
    <text evidence="8 11 15 18 19 20 22 26">Plays an essential role virus particle assembly and budding (PubMed:16719918, PubMed:33673144). Acts by interacting with viral ribonucleocapsid and host members of the ESCRT (endosomal sorting complex required for transport) system such as host VPS4, PDCD6IP/ALIX, NEDD4 or TGS101 (PubMed:15892969, PubMed:16719918, PubMed:23637409, PubMed:25786915, PubMed:26753796, PubMed:27489272). The interaction with host E3 ubiquitin ligase SMURF2 also facilitates virus budding (PubMed:33673144). May play a role in immune cell dysfunction by being packaged into exosomes that can decrease the viability of recipient cells (via RNAi suppression and exosome-bystander apoptosis) (PubMed:27872619).</text>
</comment>
<comment type="subunit">
    <text evidence="3 4 5 6 10 12 14 16 17 18 19 20 24 26">Homodimer (PubMed:23953110). Homohexamer (PubMed:11118208, PubMed:23953110). Homooctamer (PubMed:12919741). Exists as a dimer until it reorganizes at the plasma membrane into a hexameric form using phosphatidylinositol 4,5-bisphosphate (PI(4,5)P2) (PubMed:23953110, PubMed:25159197, PubMed:26753796, PubMed:29950600). Hexamers are critical for budding (PubMed:23953110). Octamers function in genome replication and RNA binding (PubMed:12919741). Interacts with host TSG101 (PubMed:12559917). As a homohexamer, interacts with the WW domain 3 of host NEDD4 (PubMed:11095724, PubMed:12559917). Interacts with the nucleoprotein/NP (PubMed:17229682, PubMed:21987757). Interacts (via YPx(n)L/I motif) with host PDCD6IP/ALIX; this interaction supports efficient egress of viral particles (PubMed:25786915). Interacts with VP35 (PubMed:16698994). Interacts with host ITCH; this interaction is required for efficient egress (PubMed:27489272). Interacts (via PPXY motif) with host SMURF2 (via WW domains); the interaction positively regulates virus budding (PubMed:33673144).</text>
</comment>
<comment type="interaction">
    <interactant intactId="EBI-25753960">
        <id>Q05128</id>
    </interactant>
    <interactant intactId="EBI-25753960">
        <id>Q05128</id>
        <label>VP40</label>
    </interactant>
    <organismsDiffer>false</organismsDiffer>
    <experiments>4</experiments>
</comment>
<comment type="subcellular location">
    <subcellularLocation>
        <location evidence="14">Host cytoplasm</location>
    </subcellularLocation>
    <subcellularLocation>
        <location evidence="14 19 23">Host cell membrane</location>
    </subcellularLocation>
    <subcellularLocation>
        <location evidence="2">Virion membrane</location>
        <topology evidence="2">Peripheral membrane protein</topology>
    </subcellularLocation>
    <subcellularLocation>
        <location evidence="2">Host late endosome membrane</location>
        <topology evidence="2">Peripheral membrane protein</topology>
    </subcellularLocation>
    <subcellularLocation>
        <location evidence="2">Host cell membrane</location>
        <topology evidence="2">Peripheral membrane protein</topology>
        <orientation evidence="2">Cytoplasmic side</orientation>
    </subcellularLocation>
    <subcellularLocation>
        <location evidence="2">Host endomembrane system</location>
        <topology evidence="2">Peripheral membrane protein</topology>
    </subcellularLocation>
    <subcellularLocation>
        <location evidence="22">Secreted</location>
        <location evidence="22">Extracellular exosome</location>
    </subcellularLocation>
    <text evidence="2">In virion, localizes on the inner side of the membrane. In the host cell, it is found associated with virus-induced membrane proliferation foci and probably also in multivesicular bodies. These VP40-enriched membrane clusters are then redistributed to the plasma membrane where budding takes place.</text>
</comment>
<comment type="domain">
    <text evidence="3 5 26">Late-budding domains (L domains) are short sequence motifs essential for viral particle budding. They recruit proteins of the host ESCRT machinery (Endosomal Sorting Complex Required for Transport) or ESCRT-associated proteins. VP40 contains two overlapping L domains: a PTAP/PSAP motif, which interacts with the UEV domain of TSG101 and a PPXY motif which interacts with the WW domain 3 of NEDD4 E3 ubiquitin ligase and the three WW domains of SMURF2 E3 ubiquitin ligase.</text>
</comment>
<comment type="PTM">
    <text evidence="21 25">Sumoylated with host SUMO1, SUMO2. Sumoylation provides stability to VP40 (PubMed:27849047). Acetylated by host EP300 in vitro (PubMed:30205953).</text>
</comment>
<comment type="PTM">
    <text evidence="23">Ubiquitinated by host WWP1. This modification mediates efficient viral budding.</text>
</comment>
<comment type="miscellaneous">
    <text>Most abundant protein in the virion.</text>
</comment>
<comment type="similarity">
    <text evidence="28">Belongs to the filoviridae matrix protein VP40 family.</text>
</comment>
<comment type="caution">
    <text evidence="25">Acetylation has been show in vitro using purified recombinant proteins. This PTM is unsure util proven in vivo.</text>
</comment>
<gene>
    <name type="primary">VP40</name>
</gene>
<sequence length="326" mass="35183">MRRVILPTAPPEYMEAIYPVRSNSTIARGGNSNTGFLTPESVNGDTPSNPLRPIADDTIDHASHTPGSVSSAFILEAMVNVISGPKVLMKQIPIWLPLGVADQKTYSFDSTTAAIMLASYTITHFGKATNPLVRVNRLGPGIPDHPLRLLRIGNQAFLQEFVLPPVQLPQYFTFDLTALKLITQPLPAATWTDDTPTGSNGALRPGISFHPKLRPILLPNKSGKKGNSADLTSPEKIQAIMTSLQDFKIVPIDPTKNIMGIEVPETLVHKLTGKKVTSKNGQPIIPVLLPKYIGLDPVAPGDLTMVITQDCDTCHSPASLPAVIEK</sequence>
<name>VP40_EBOZM</name>
<protein>
    <recommendedName>
        <fullName>Matrix protein VP40</fullName>
    </recommendedName>
    <alternativeName>
        <fullName evidence="27">Ebola VP40</fullName>
        <shortName evidence="27">eVP40</shortName>
    </alternativeName>
    <alternativeName>
        <fullName>Membrane-associated protein VP40</fullName>
    </alternativeName>
</protein>
<evidence type="ECO:0000250" key="1"/>
<evidence type="ECO:0000250" key="2">
    <source>
        <dbReference type="UniProtKB" id="P35260"/>
    </source>
</evidence>
<evidence type="ECO:0000269" key="3">
    <source>
    </source>
</evidence>
<evidence type="ECO:0000269" key="4">
    <source>
    </source>
</evidence>
<evidence type="ECO:0000269" key="5">
    <source>
    </source>
</evidence>
<evidence type="ECO:0000269" key="6">
    <source>
    </source>
</evidence>
<evidence type="ECO:0000269" key="7">
    <source>
    </source>
</evidence>
<evidence type="ECO:0000269" key="8">
    <source>
    </source>
</evidence>
<evidence type="ECO:0000269" key="9">
    <source>
    </source>
</evidence>
<evidence type="ECO:0000269" key="10">
    <source>
    </source>
</evidence>
<evidence type="ECO:0000269" key="11">
    <source>
    </source>
</evidence>
<evidence type="ECO:0000269" key="12">
    <source>
    </source>
</evidence>
<evidence type="ECO:0000269" key="13">
    <source>
    </source>
</evidence>
<evidence type="ECO:0000269" key="14">
    <source>
    </source>
</evidence>
<evidence type="ECO:0000269" key="15">
    <source>
    </source>
</evidence>
<evidence type="ECO:0000269" key="16">
    <source>
    </source>
</evidence>
<evidence type="ECO:0000269" key="17">
    <source>
    </source>
</evidence>
<evidence type="ECO:0000269" key="18">
    <source>
    </source>
</evidence>
<evidence type="ECO:0000269" key="19">
    <source>
    </source>
</evidence>
<evidence type="ECO:0000269" key="20">
    <source>
    </source>
</evidence>
<evidence type="ECO:0000269" key="21">
    <source>
    </source>
</evidence>
<evidence type="ECO:0000269" key="22">
    <source>
    </source>
</evidence>
<evidence type="ECO:0000269" key="23">
    <source>
    </source>
</evidence>
<evidence type="ECO:0000269" key="24">
    <source>
    </source>
</evidence>
<evidence type="ECO:0000269" key="25">
    <source>
    </source>
</evidence>
<evidence type="ECO:0000269" key="26">
    <source>
    </source>
</evidence>
<evidence type="ECO:0000303" key="27">
    <source>
    </source>
</evidence>
<evidence type="ECO:0000305" key="28"/>
<evidence type="ECO:0007829" key="29">
    <source>
        <dbReference type="PDB" id="4LDB"/>
    </source>
</evidence>
<evidence type="ECO:0007829" key="30">
    <source>
        <dbReference type="PDB" id="7JZJ"/>
    </source>
</evidence>
<evidence type="ECO:0007829" key="31">
    <source>
        <dbReference type="PDB" id="7K5L"/>
    </source>
</evidence>
<accession>Q05128</accession>
<organismHost>
    <name type="scientific">Epomops franqueti</name>
    <name type="common">Franquet's epauletted fruit bat</name>
    <name type="synonym">Epomophorus franqueti</name>
    <dbReference type="NCBI Taxonomy" id="77231"/>
</organismHost>
<organismHost>
    <name type="scientific">Homo sapiens</name>
    <name type="common">Human</name>
    <dbReference type="NCBI Taxonomy" id="9606"/>
</organismHost>
<organismHost>
    <name type="scientific">Myonycteris torquata</name>
    <name type="common">Little collared fruit bat</name>
    <dbReference type="NCBI Taxonomy" id="77243"/>
</organismHost>
<dbReference type="EMBL" id="X61274">
    <property type="protein sequence ID" value="CAA43579.1"/>
    <property type="molecule type" value="Genomic_RNA"/>
</dbReference>
<dbReference type="EMBL" id="L11365">
    <property type="protein sequence ID" value="AAB81003.1"/>
    <property type="molecule type" value="Genomic_RNA"/>
</dbReference>
<dbReference type="EMBL" id="AF086833">
    <property type="protein sequence ID" value="AAD14583.1"/>
    <property type="molecule type" value="Genomic_RNA"/>
</dbReference>
<dbReference type="EMBL" id="AF272001">
    <property type="protein sequence ID" value="AAG40166.1"/>
    <property type="molecule type" value="Genomic_RNA"/>
</dbReference>
<dbReference type="EMBL" id="AF499101">
    <property type="protein sequence ID" value="AAM76033.1"/>
    <property type="molecule type" value="Genomic_RNA"/>
</dbReference>
<dbReference type="EMBL" id="AY142960">
    <property type="protein sequence ID" value="AAN37506.1"/>
    <property type="molecule type" value="Genomic_RNA"/>
</dbReference>
<dbReference type="RefSeq" id="NP_066245.1">
    <property type="nucleotide sequence ID" value="NC_002549.1"/>
</dbReference>
<dbReference type="PDB" id="1H2C">
    <property type="method" value="X-ray"/>
    <property type="resolution" value="1.60 A"/>
    <property type="chains" value="A=55-194"/>
</dbReference>
<dbReference type="PDB" id="1H2D">
    <property type="method" value="X-ray"/>
    <property type="resolution" value="2.60 A"/>
    <property type="chains" value="A/B=31-212"/>
</dbReference>
<dbReference type="PDB" id="2KQ0">
    <property type="method" value="NMR"/>
    <property type="chains" value="B=5-16"/>
</dbReference>
<dbReference type="PDB" id="4EJE">
    <property type="method" value="X-ray"/>
    <property type="resolution" value="2.20 A"/>
    <property type="chains" value="C/D=5-13"/>
</dbReference>
<dbReference type="PDB" id="4LDB">
    <property type="method" value="X-ray"/>
    <property type="resolution" value="3.10 A"/>
    <property type="chains" value="A/B/C/D=44-326"/>
</dbReference>
<dbReference type="PDB" id="4LDD">
    <property type="method" value="X-ray"/>
    <property type="resolution" value="3.50 A"/>
    <property type="chains" value="A/B/C=44-326"/>
</dbReference>
<dbReference type="PDB" id="4LDI">
    <property type="method" value="X-ray"/>
    <property type="resolution" value="4.15 A"/>
    <property type="chains" value="A/B=44-326"/>
</dbReference>
<dbReference type="PDB" id="4LDM">
    <property type="method" value="X-ray"/>
    <property type="resolution" value="1.85 A"/>
    <property type="chains" value="A=44-188"/>
</dbReference>
<dbReference type="PDB" id="7JZJ">
    <property type="method" value="X-ray"/>
    <property type="resolution" value="2.46 A"/>
    <property type="chains" value="A/B/C/D=43-326"/>
</dbReference>
<dbReference type="PDB" id="7JZT">
    <property type="method" value="X-ray"/>
    <property type="resolution" value="3.77 A"/>
    <property type="chains" value="A/B/C/D=43-326"/>
</dbReference>
<dbReference type="PDB" id="7K5D">
    <property type="method" value="X-ray"/>
    <property type="resolution" value="1.78 A"/>
    <property type="chains" value="A=44-194"/>
</dbReference>
<dbReference type="PDB" id="7K5L">
    <property type="method" value="X-ray"/>
    <property type="resolution" value="1.38 A"/>
    <property type="chains" value="A=44-194"/>
</dbReference>
<dbReference type="PDBsum" id="1H2C"/>
<dbReference type="PDBsum" id="1H2D"/>
<dbReference type="PDBsum" id="2KQ0"/>
<dbReference type="PDBsum" id="4EJE"/>
<dbReference type="PDBsum" id="4LDB"/>
<dbReference type="PDBsum" id="4LDD"/>
<dbReference type="PDBsum" id="4LDI"/>
<dbReference type="PDBsum" id="4LDM"/>
<dbReference type="PDBsum" id="7JZJ"/>
<dbReference type="PDBsum" id="7JZT"/>
<dbReference type="PDBsum" id="7K5D"/>
<dbReference type="PDBsum" id="7K5L"/>
<dbReference type="BMRB" id="Q05128"/>
<dbReference type="EMDB" id="EMD-11660"/>
<dbReference type="EMDB" id="EMD-11661"/>
<dbReference type="EMDB" id="EMD-11662"/>
<dbReference type="EMDB" id="EMD-3872"/>
<dbReference type="SMR" id="Q05128"/>
<dbReference type="ELM" id="Q05128"/>
<dbReference type="MoonProt" id="Q05128"/>
<dbReference type="TCDB" id="9.A.73.1.1">
    <property type="family name" value="the virus matrix protein (vmp) family"/>
</dbReference>
<dbReference type="DNASU" id="911825"/>
<dbReference type="GeneID" id="911825"/>
<dbReference type="KEGG" id="vg:911825"/>
<dbReference type="EvolutionaryTrace" id="Q05128"/>
<dbReference type="Proteomes" id="UP000007209">
    <property type="component" value="Genome"/>
</dbReference>
<dbReference type="Proteomes" id="UP000109874">
    <property type="component" value="Genome"/>
</dbReference>
<dbReference type="Proteomes" id="UP000149419">
    <property type="component" value="Genome"/>
</dbReference>
<dbReference type="Proteomes" id="UP000150973">
    <property type="component" value="Genome"/>
</dbReference>
<dbReference type="Proteomes" id="UP000180447">
    <property type="component" value="Genome"/>
</dbReference>
<dbReference type="GO" id="GO:0005576">
    <property type="term" value="C:extracellular region"/>
    <property type="evidence" value="ECO:0007669"/>
    <property type="project" value="UniProtKB-SubCell"/>
</dbReference>
<dbReference type="GO" id="GO:0043657">
    <property type="term" value="C:host cell"/>
    <property type="evidence" value="ECO:0007669"/>
    <property type="project" value="GOC"/>
</dbReference>
<dbReference type="GO" id="GO:0033645">
    <property type="term" value="C:host cell endomembrane system"/>
    <property type="evidence" value="ECO:0007669"/>
    <property type="project" value="UniProtKB-SubCell"/>
</dbReference>
<dbReference type="GO" id="GO:0044185">
    <property type="term" value="C:host cell late endosome membrane"/>
    <property type="evidence" value="ECO:0007669"/>
    <property type="project" value="UniProtKB-SubCell"/>
</dbReference>
<dbReference type="GO" id="GO:0033644">
    <property type="term" value="C:host cell membrane"/>
    <property type="evidence" value="ECO:0000314"/>
    <property type="project" value="CACAO"/>
</dbReference>
<dbReference type="GO" id="GO:0020002">
    <property type="term" value="C:host cell plasma membrane"/>
    <property type="evidence" value="ECO:0007669"/>
    <property type="project" value="UniProtKB-SubCell"/>
</dbReference>
<dbReference type="GO" id="GO:0045121">
    <property type="term" value="C:membrane raft"/>
    <property type="evidence" value="ECO:0000314"/>
    <property type="project" value="CACAO"/>
</dbReference>
<dbReference type="GO" id="GO:1990904">
    <property type="term" value="C:ribonucleoprotein complex"/>
    <property type="evidence" value="ECO:0007669"/>
    <property type="project" value="UniProtKB-KW"/>
</dbReference>
<dbReference type="GO" id="GO:0055036">
    <property type="term" value="C:virion membrane"/>
    <property type="evidence" value="ECO:0007669"/>
    <property type="project" value="UniProtKB-SubCell"/>
</dbReference>
<dbReference type="GO" id="GO:0042802">
    <property type="term" value="F:identical protein binding"/>
    <property type="evidence" value="ECO:0000353"/>
    <property type="project" value="IntAct"/>
</dbReference>
<dbReference type="GO" id="GO:0003723">
    <property type="term" value="F:RNA binding"/>
    <property type="evidence" value="ECO:0007669"/>
    <property type="project" value="UniProtKB-KW"/>
</dbReference>
<dbReference type="GO" id="GO:0039660">
    <property type="term" value="F:structural constituent of virion"/>
    <property type="evidence" value="ECO:0007669"/>
    <property type="project" value="UniProtKB-KW"/>
</dbReference>
<dbReference type="GO" id="GO:0075733">
    <property type="term" value="P:intracellular transport of virus"/>
    <property type="evidence" value="ECO:0000315"/>
    <property type="project" value="CACAO"/>
</dbReference>
<dbReference type="GO" id="GO:0044071">
    <property type="term" value="P:symbiont-mediated perturbation of host cell cycle progression"/>
    <property type="evidence" value="ECO:0000269"/>
    <property type="project" value="SigSci"/>
</dbReference>
<dbReference type="GO" id="GO:0044414">
    <property type="term" value="P:symbiont-mediated suppression of host defenses"/>
    <property type="evidence" value="ECO:0000315"/>
    <property type="project" value="CACAO"/>
</dbReference>
<dbReference type="GO" id="GO:0140533">
    <property type="term" value="P:symbiont-mediated suppression of host RNAi-mediated antiviral immune response"/>
    <property type="evidence" value="ECO:0000315"/>
    <property type="project" value="GO_Central"/>
</dbReference>
<dbReference type="GO" id="GO:0046755">
    <property type="term" value="P:viral budding"/>
    <property type="evidence" value="ECO:0000315"/>
    <property type="project" value="CACAO"/>
</dbReference>
<dbReference type="GO" id="GO:0046761">
    <property type="term" value="P:viral budding from plasma membrane"/>
    <property type="evidence" value="ECO:0000314"/>
    <property type="project" value="UniProtKB"/>
</dbReference>
<dbReference type="GO" id="GO:0039702">
    <property type="term" value="P:viral budding via host ESCRT complex"/>
    <property type="evidence" value="ECO:0007669"/>
    <property type="project" value="UniProtKB-KW"/>
</dbReference>
<dbReference type="DisProt" id="DP02967"/>
<dbReference type="Gene3D" id="2.60.510.10">
    <property type="entry name" value="EV matrix protein"/>
    <property type="match status" value="1"/>
</dbReference>
<dbReference type="Gene3D" id="2.70.20.20">
    <property type="entry name" value="Matrix protein VP40, N-terminal domain"/>
    <property type="match status" value="1"/>
</dbReference>
<dbReference type="InterPro" id="IPR008986">
    <property type="entry name" value="EV_matrix"/>
</dbReference>
<dbReference type="InterPro" id="IPR035092">
    <property type="entry name" value="EV_matrix_protein_C"/>
</dbReference>
<dbReference type="InterPro" id="IPR043079">
    <property type="entry name" value="EV_matrix_protein_N"/>
</dbReference>
<dbReference type="InterPro" id="IPR038057">
    <property type="entry name" value="EV_matrix_sf"/>
</dbReference>
<dbReference type="Pfam" id="PF07447">
    <property type="entry name" value="Matrix_Filo"/>
    <property type="match status" value="1"/>
</dbReference>
<dbReference type="PIRSF" id="PIRSF018327">
    <property type="entry name" value="VP40_FiloV"/>
    <property type="match status" value="1"/>
</dbReference>
<dbReference type="SUPFAM" id="SSF50012">
    <property type="entry name" value="EV matrix protein"/>
    <property type="match status" value="2"/>
</dbReference>
<feature type="chain" id="PRO_0000222164" description="Matrix protein VP40">
    <location>
        <begin position="1"/>
        <end position="326"/>
    </location>
</feature>
<feature type="region of interest" description="Important for oligomerization">
    <location>
        <begin position="212"/>
        <end position="214"/>
    </location>
</feature>
<feature type="region of interest" description="Membrane-binding" evidence="1">
    <location>
        <begin position="213"/>
        <end position="326"/>
    </location>
</feature>
<feature type="short sequence motif" description="PTAP/PSAP motif" evidence="8">
    <location>
        <begin position="7"/>
        <end position="10"/>
    </location>
</feature>
<feature type="short sequence motif" description="PPXY motif" evidence="8">
    <location>
        <begin position="10"/>
        <end position="13"/>
    </location>
</feature>
<feature type="short sequence motif" description="Essential for interaction with host PDCD6IP/ALIX" evidence="18">
    <location>
        <begin position="18"/>
        <end position="26"/>
    </location>
</feature>
<feature type="cross-link" description="Glycyl lysine isopeptide (Lys-Gly) (interchain with G-Cter in host SUMO1 or SUMO2)" evidence="21">
    <location>
        <position position="326"/>
    </location>
</feature>
<feature type="mutagenesis site" description="Partial loss of budding." evidence="9">
    <original>P</original>
    <variation>A</variation>
    <location>
        <position position="7"/>
    </location>
</feature>
<feature type="mutagenesis site" description="Abolishes interaction with host SMURF2." evidence="26">
    <original>PPEY</original>
    <variation>AAEA</variation>
    <location>
        <begin position="10"/>
        <end position="13"/>
    </location>
</feature>
<feature type="mutagenesis site" description="90% loss of budding." evidence="9">
    <original>PP</original>
    <variation>AA</variation>
    <location>
        <begin position="10"/>
        <end position="11"/>
    </location>
</feature>
<feature type="mutagenesis site" description="Complete loss of budding.">
    <original>P</original>
    <variation>A</variation>
    <location>
        <position position="11"/>
    </location>
</feature>
<feature type="mutagenesis site" description="Complete loss of interaction with WW domain containing proteins." evidence="3">
    <original>Y</original>
    <variation>A</variation>
    <location>
        <position position="13"/>
    </location>
</feature>
<feature type="mutagenesis site" description="Partial loss of RNA-binding. Complete loss of virus infectivity." evidence="7">
    <original>F</original>
    <variation>A</variation>
    <location>
        <position position="125"/>
    </location>
</feature>
<feature type="mutagenesis site" description="Complete loss of RNA-binding. Complete loss of virus infectivity." evidence="7">
    <original>R</original>
    <variation>A</variation>
    <location>
        <position position="134"/>
    </location>
</feature>
<feature type="mutagenesis site" description="85% loss of budding efficiency. Impaired oligomerization." evidence="13">
    <original>KLR</original>
    <variation>AAA</variation>
    <location>
        <begin position="212"/>
        <end position="214"/>
    </location>
</feature>
<feature type="mutagenesis site" description="80% loss of budding efficiency. No effect on oligomerization." evidence="13">
    <original>KLR</original>
    <variation>ALA</variation>
    <location>
        <begin position="212"/>
        <end position="214"/>
    </location>
</feature>
<feature type="mutagenesis site" description="84% loss of budding efficiency. Impaired oligomerization.">
    <original>KL</original>
    <variation>AA</variation>
    <location>
        <begin position="212"/>
        <end position="213"/>
    </location>
</feature>
<feature type="mutagenesis site" description="40% loss of budding efficiency. No effect on oligomerization.">
    <original>K</original>
    <variation>A</variation>
    <location>
        <position position="212"/>
    </location>
</feature>
<feature type="mutagenesis site" description="84% loss of budding efficiency. Impaired oligomerization.">
    <original>LR</original>
    <variation>AA</variation>
    <location>
        <begin position="213"/>
        <end position="214"/>
    </location>
</feature>
<feature type="mutagenesis site" description="87% loss of budding efficiency. Impaired oligomerization.">
    <original>L</original>
    <variation>A</variation>
    <location>
        <position position="213"/>
    </location>
</feature>
<feature type="mutagenesis site" description="40% loss of budding efficiency.">
    <original>L</original>
    <variation>I</variation>
    <location>
        <position position="213"/>
    </location>
</feature>
<feature type="mutagenesis site" description="65% loss of budding efficiency. No effect on oligomerization.">
    <original>R</original>
    <variation>A</variation>
    <location>
        <position position="214"/>
    </location>
</feature>
<feature type="mutagenesis site" description="Complete loss of sumoylation." evidence="21">
    <original>K</original>
    <variation>R</variation>
    <location>
        <position position="326"/>
    </location>
</feature>
<feature type="helix" evidence="30">
    <location>
        <begin position="61"/>
        <end position="64"/>
    </location>
</feature>
<feature type="strand" evidence="31">
    <location>
        <begin position="71"/>
        <end position="84"/>
    </location>
</feature>
<feature type="strand" evidence="31">
    <location>
        <begin position="87"/>
        <end position="101"/>
    </location>
</feature>
<feature type="strand" evidence="31">
    <location>
        <begin position="103"/>
        <end position="106"/>
    </location>
</feature>
<feature type="helix" evidence="31">
    <location>
        <begin position="108"/>
        <end position="117"/>
    </location>
</feature>
<feature type="strand" evidence="31">
    <location>
        <begin position="120"/>
        <end position="126"/>
    </location>
</feature>
<feature type="strand" evidence="30">
    <location>
        <begin position="128"/>
        <end position="130"/>
    </location>
</feature>
<feature type="strand" evidence="31">
    <location>
        <begin position="132"/>
        <end position="139"/>
    </location>
</feature>
<feature type="helix" evidence="31">
    <location>
        <begin position="148"/>
        <end position="151"/>
    </location>
</feature>
<feature type="strand" evidence="31">
    <location>
        <begin position="153"/>
        <end position="158"/>
    </location>
</feature>
<feature type="helix" evidence="31">
    <location>
        <begin position="159"/>
        <end position="162"/>
    </location>
</feature>
<feature type="strand" evidence="31">
    <location>
        <begin position="173"/>
        <end position="185"/>
    </location>
</feature>
<feature type="turn" evidence="29">
    <location>
        <begin position="198"/>
        <end position="200"/>
    </location>
</feature>
<feature type="strand" evidence="30">
    <location>
        <begin position="202"/>
        <end position="209"/>
    </location>
</feature>
<feature type="strand" evidence="29">
    <location>
        <begin position="211"/>
        <end position="213"/>
    </location>
</feature>
<feature type="helix" evidence="30">
    <location>
        <begin position="234"/>
        <end position="243"/>
    </location>
</feature>
<feature type="helix" evidence="30">
    <location>
        <begin position="244"/>
        <end position="246"/>
    </location>
</feature>
<feature type="strand" evidence="29">
    <location>
        <begin position="248"/>
        <end position="253"/>
    </location>
</feature>
<feature type="helix" evidence="30">
    <location>
        <begin position="254"/>
        <end position="256"/>
    </location>
</feature>
<feature type="strand" evidence="30">
    <location>
        <begin position="258"/>
        <end position="262"/>
    </location>
</feature>
<feature type="helix" evidence="30">
    <location>
        <begin position="265"/>
        <end position="272"/>
    </location>
</feature>
<feature type="strand" evidence="30">
    <location>
        <begin position="284"/>
        <end position="288"/>
    </location>
</feature>
<feature type="strand" evidence="30">
    <location>
        <begin position="304"/>
        <end position="309"/>
    </location>
</feature>
<feature type="turn" evidence="30">
    <location>
        <begin position="317"/>
        <end position="319"/>
    </location>
</feature>
<proteinExistence type="evidence at protein level"/>
<keyword id="KW-0002">3D-structure</keyword>
<keyword id="KW-1032">Host cell membrane</keyword>
<keyword id="KW-1035">Host cytoplasm</keyword>
<keyword id="KW-1039">Host endosome</keyword>
<keyword id="KW-1043">Host membrane</keyword>
<keyword id="KW-0945">Host-virus interaction</keyword>
<keyword id="KW-1090">Inhibition of host innate immune response by virus</keyword>
<keyword id="KW-1017">Isopeptide bond</keyword>
<keyword id="KW-0472">Membrane</keyword>
<keyword id="KW-1185">Reference proteome</keyword>
<keyword id="KW-0687">Ribonucleoprotein</keyword>
<keyword id="KW-0694">RNA-binding</keyword>
<keyword id="KW-0964">Secreted</keyword>
<keyword id="KW-0941">Suppressor of RNA silencing</keyword>
<keyword id="KW-0832">Ubl conjugation</keyword>
<keyword id="KW-1198">Viral budding</keyword>
<keyword id="KW-1187">Viral budding via the host ESCRT complexes</keyword>
<keyword id="KW-0899">Viral immunoevasion</keyword>
<keyword id="KW-0468">Viral matrix protein</keyword>
<keyword id="KW-1188">Viral release from host cell</keyword>
<keyword id="KW-0693">Viral RNA replication</keyword>
<keyword id="KW-0946">Virion</keyword>
<organism>
    <name type="scientific">Zaire ebolavirus (strain Mayinga-76)</name>
    <name type="common">ZEBOV</name>
    <name type="synonym">Zaire Ebola virus</name>
    <dbReference type="NCBI Taxonomy" id="128952"/>
    <lineage>
        <taxon>Viruses</taxon>
        <taxon>Riboviria</taxon>
        <taxon>Orthornavirae</taxon>
        <taxon>Negarnaviricota</taxon>
        <taxon>Haploviricotina</taxon>
        <taxon>Monjiviricetes</taxon>
        <taxon>Mononegavirales</taxon>
        <taxon>Filoviridae</taxon>
        <taxon>Orthoebolavirus</taxon>
        <taxon>Orthoebolavirus zairense</taxon>
        <taxon>Zaire ebolavirus</taxon>
    </lineage>
</organism>